<proteinExistence type="inferred from homology"/>
<gene>
    <name type="ORF">AC4</name>
    <name type="ORF">AL4</name>
</gene>
<name>AC4_ICMV</name>
<reference key="1">
    <citation type="journal article" date="1993" name="J. Gen. Virol.">
        <title>Nucleotide sequence evidence for the occurrence of three distinct whitefly-transmitted geminiviruses in cassava.</title>
        <authorList>
            <person name="Hong Y.G."/>
            <person name="Robinson D.J."/>
            <person name="Harrison B.D."/>
        </authorList>
    </citation>
    <scope>NUCLEOTIDE SEQUENCE [GENOMIC DNA]</scope>
</reference>
<dbReference type="EMBL" id="Z24758">
    <property type="protein sequence ID" value="CAA80886.1"/>
    <property type="molecule type" value="Genomic_DNA"/>
</dbReference>
<dbReference type="PIR" id="S35882">
    <property type="entry name" value="S35882"/>
</dbReference>
<dbReference type="RefSeq" id="NP_047234.1">
    <property type="nucleotide sequence ID" value="NC_001932.1"/>
</dbReference>
<dbReference type="SMR" id="Q08588"/>
<dbReference type="KEGG" id="vg:991057"/>
<dbReference type="OrthoDB" id="24090at10239"/>
<dbReference type="Proteomes" id="UP000007210">
    <property type="component" value="Genome"/>
</dbReference>
<dbReference type="GO" id="GO:0052170">
    <property type="term" value="P:symbiont-mediated suppression of host innate immune response"/>
    <property type="evidence" value="ECO:0007669"/>
    <property type="project" value="UniProtKB-KW"/>
</dbReference>
<dbReference type="InterPro" id="IPR002488">
    <property type="entry name" value="Gemini_C4"/>
</dbReference>
<dbReference type="Pfam" id="PF01492">
    <property type="entry name" value="Gemini_C4"/>
    <property type="match status" value="1"/>
</dbReference>
<protein>
    <recommendedName>
        <fullName>Protein AC4</fullName>
    </recommendedName>
    <alternativeName>
        <fullName>Protein AL4</fullName>
    </alternativeName>
</protein>
<comment type="function">
    <text evidence="1">Pathogenicity determinant (By similarity). May act as a suppressor of RNA-mediated gene silencing, also known as post-transcriptional gene silencing (PTGS), a mechanism of plant viral defense that limits the accumulation of viral RNAs.</text>
</comment>
<comment type="similarity">
    <text evidence="2">Belongs to the geminiviridae protein AC4/C4 family.</text>
</comment>
<keyword id="KW-0945">Host-virus interaction</keyword>
<keyword id="KW-1090">Inhibition of host innate immune response by virus</keyword>
<keyword id="KW-0941">Suppressor of RNA silencing</keyword>
<keyword id="KW-0899">Viral immunoevasion</keyword>
<accession>Q08588</accession>
<organism>
    <name type="scientific">Indian cassava mosaic virus</name>
    <name type="common">ICMV</name>
    <dbReference type="NCBI Taxonomy" id="31600"/>
    <lineage>
        <taxon>Viruses</taxon>
        <taxon>Monodnaviria</taxon>
        <taxon>Shotokuvirae</taxon>
        <taxon>Cressdnaviricota</taxon>
        <taxon>Repensiviricetes</taxon>
        <taxon>Geplafuvirales</taxon>
        <taxon>Geminiviridae</taxon>
        <taxon>Begomovirus</taxon>
    </lineage>
</organism>
<organismHost>
    <name type="scientific">Manihot esculenta</name>
    <name type="common">Cassava</name>
    <name type="synonym">Jatropha manihot</name>
    <dbReference type="NCBI Taxonomy" id="3983"/>
</organismHost>
<feature type="chain" id="PRO_0000222270" description="Protein AC4">
    <location>
        <begin position="1"/>
        <end position="102"/>
    </location>
</feature>
<evidence type="ECO:0000250" key="1"/>
<evidence type="ECO:0000305" key="2"/>
<sequence>MRMGSLICTCSSSSKANTNARISDSSTWYHQPGQHISIQTFRELNPAPTSSPTSTRTVILGDGEHFRSMDDQPEGVNNLQTTLTPRHLTAAVNQRLLRSLEN</sequence>